<accession>Q6EW40</accession>
<evidence type="ECO:0000250" key="1"/>
<evidence type="ECO:0000255" key="2">
    <source>
        <dbReference type="HAMAP-Rule" id="MF_00610"/>
    </source>
</evidence>
<sequence length="322" mass="35568">MQKNRNTFSWVKEQMTRCISVSMMIYVITRASISNAYPIFAQQSYENPREATGRIVCANCHLANKPVDIEVPQAVLPDTVFEAVVRIPYDMQLKQVLANGKKGGLNVGAVLILPEGFELAPPDRISPEMKEKMGNLSFQSYRPNKKNILVVGPVPGQKYSEIVFPILSPDPATKKEVHFLKYPIYVGGNRGRGQIYPDGSKSNNTVYNASAAGIVSKIVRKEKKGGYEITISDASNGHETVDIIPPGPELLVSEGEYIKLDQPLTSNPNVGGFGQGDAEIVLQDPLRIQGLLFFLASVILAQIFLVLKKKQFEKVQLAEMNF</sequence>
<proteinExistence type="inferred from homology"/>
<keyword id="KW-0150">Chloroplast</keyword>
<keyword id="KW-0249">Electron transport</keyword>
<keyword id="KW-0349">Heme</keyword>
<keyword id="KW-0408">Iron</keyword>
<keyword id="KW-0472">Membrane</keyword>
<keyword id="KW-0479">Metal-binding</keyword>
<keyword id="KW-0602">Photosynthesis</keyword>
<keyword id="KW-0934">Plastid</keyword>
<keyword id="KW-0732">Signal</keyword>
<keyword id="KW-0793">Thylakoid</keyword>
<keyword id="KW-0812">Transmembrane</keyword>
<keyword id="KW-1133">Transmembrane helix</keyword>
<keyword id="KW-0813">Transport</keyword>
<organism>
    <name type="scientific">Nymphaea alba</name>
    <name type="common">White water-lily</name>
    <name type="synonym">Castalia alba</name>
    <dbReference type="NCBI Taxonomy" id="34301"/>
    <lineage>
        <taxon>Eukaryota</taxon>
        <taxon>Viridiplantae</taxon>
        <taxon>Streptophyta</taxon>
        <taxon>Embryophyta</taxon>
        <taxon>Tracheophyta</taxon>
        <taxon>Spermatophyta</taxon>
        <taxon>Magnoliopsida</taxon>
        <taxon>Nymphaeales</taxon>
        <taxon>Nymphaeaceae</taxon>
        <taxon>Nymphaea</taxon>
    </lineage>
</organism>
<geneLocation type="chloroplast"/>
<comment type="function">
    <text evidence="2">Component of the cytochrome b6-f complex, which mediates electron transfer between photosystem II (PSII) and photosystem I (PSI), cyclic electron flow around PSI, and state transitions.</text>
</comment>
<comment type="cofactor">
    <cofactor evidence="2">
        <name>heme</name>
        <dbReference type="ChEBI" id="CHEBI:30413"/>
    </cofactor>
    <text evidence="2">Binds 1 heme group covalently.</text>
</comment>
<comment type="subunit">
    <text evidence="1">The 4 large subunits of the cytochrome b6-f complex are cytochrome b6, subunit IV (17 kDa polypeptide, petD), cytochrome f and the Rieske protein, while the 4 small subunits are PetG, PetL, PetM and PetN. The complex functions as a dimer (By similarity).</text>
</comment>
<comment type="subcellular location">
    <subcellularLocation>
        <location evidence="2">Plastid</location>
        <location evidence="2">Chloroplast thylakoid membrane</location>
        <topology evidence="2">Single-pass membrane protein</topology>
    </subcellularLocation>
</comment>
<comment type="similarity">
    <text evidence="2">Belongs to the cytochrome f family.</text>
</comment>
<protein>
    <recommendedName>
        <fullName evidence="2">Cytochrome f</fullName>
    </recommendedName>
</protein>
<reference key="1">
    <citation type="journal article" date="2004" name="Mol. Biol. Evol.">
        <title>The chloroplast genome of Nymphaea alba: whole-genome analyses and the problem of identifying the most basal angiosperm.</title>
        <authorList>
            <person name="Goremykin V.V."/>
            <person name="Hirsch-Ernst K.I."/>
            <person name="Woelfl S."/>
            <person name="Hellwig F.H."/>
        </authorList>
    </citation>
    <scope>NUCLEOTIDE SEQUENCE [LARGE SCALE GENOMIC DNA]</scope>
</reference>
<dbReference type="EMBL" id="AJ627251">
    <property type="protein sequence ID" value="CAF28606.1"/>
    <property type="molecule type" value="Genomic_DNA"/>
</dbReference>
<dbReference type="RefSeq" id="YP_053168.1">
    <property type="nucleotide sequence ID" value="NC_006050.1"/>
</dbReference>
<dbReference type="SMR" id="Q6EW40"/>
<dbReference type="GeneID" id="2896224"/>
<dbReference type="GO" id="GO:0009535">
    <property type="term" value="C:chloroplast thylakoid membrane"/>
    <property type="evidence" value="ECO:0007669"/>
    <property type="project" value="UniProtKB-SubCell"/>
</dbReference>
<dbReference type="GO" id="GO:0009055">
    <property type="term" value="F:electron transfer activity"/>
    <property type="evidence" value="ECO:0007669"/>
    <property type="project" value="UniProtKB-UniRule"/>
</dbReference>
<dbReference type="GO" id="GO:0020037">
    <property type="term" value="F:heme binding"/>
    <property type="evidence" value="ECO:0007669"/>
    <property type="project" value="InterPro"/>
</dbReference>
<dbReference type="GO" id="GO:0005506">
    <property type="term" value="F:iron ion binding"/>
    <property type="evidence" value="ECO:0007669"/>
    <property type="project" value="InterPro"/>
</dbReference>
<dbReference type="GO" id="GO:0015979">
    <property type="term" value="P:photosynthesis"/>
    <property type="evidence" value="ECO:0007669"/>
    <property type="project" value="UniProtKB-UniRule"/>
</dbReference>
<dbReference type="FunFam" id="1.20.5.700:FF:000001">
    <property type="entry name" value="Cytochrome f"/>
    <property type="match status" value="1"/>
</dbReference>
<dbReference type="FunFam" id="2.40.50.100:FF:000007">
    <property type="entry name" value="Cytochrome f"/>
    <property type="match status" value="1"/>
</dbReference>
<dbReference type="FunFam" id="2.60.40.830:FF:000001">
    <property type="entry name" value="Cytochrome f"/>
    <property type="match status" value="1"/>
</dbReference>
<dbReference type="Gene3D" id="2.40.50.100">
    <property type="match status" value="1"/>
</dbReference>
<dbReference type="Gene3D" id="2.60.40.830">
    <property type="entry name" value="Cytochrome f large domain"/>
    <property type="match status" value="1"/>
</dbReference>
<dbReference type="Gene3D" id="1.20.5.700">
    <property type="entry name" value="Single helix bin"/>
    <property type="match status" value="1"/>
</dbReference>
<dbReference type="HAMAP" id="MF_00610">
    <property type="entry name" value="Cytb6_f_cytF"/>
    <property type="match status" value="1"/>
</dbReference>
<dbReference type="InterPro" id="IPR024058">
    <property type="entry name" value="Cyt-f_TM"/>
</dbReference>
<dbReference type="InterPro" id="IPR002325">
    <property type="entry name" value="Cyt_f"/>
</dbReference>
<dbReference type="InterPro" id="IPR024094">
    <property type="entry name" value="Cyt_f_lg_dom"/>
</dbReference>
<dbReference type="InterPro" id="IPR036826">
    <property type="entry name" value="Cyt_f_lg_dom_sf"/>
</dbReference>
<dbReference type="InterPro" id="IPR011054">
    <property type="entry name" value="Rudment_hybrid_motif"/>
</dbReference>
<dbReference type="PANTHER" id="PTHR33288">
    <property type="match status" value="1"/>
</dbReference>
<dbReference type="PANTHER" id="PTHR33288:SF10">
    <property type="entry name" value="CYTOCHROME F"/>
    <property type="match status" value="1"/>
</dbReference>
<dbReference type="Pfam" id="PF01333">
    <property type="entry name" value="Apocytochr_F_C"/>
    <property type="match status" value="1"/>
</dbReference>
<dbReference type="Pfam" id="PF16639">
    <property type="entry name" value="Apocytochr_F_N"/>
    <property type="match status" value="1"/>
</dbReference>
<dbReference type="PRINTS" id="PR00610">
    <property type="entry name" value="CYTOCHROMEF"/>
</dbReference>
<dbReference type="SUPFAM" id="SSF103431">
    <property type="entry name" value="Cytochrome f subunit of the cytochrome b6f complex, transmembrane anchor"/>
    <property type="match status" value="1"/>
</dbReference>
<dbReference type="SUPFAM" id="SSF49441">
    <property type="entry name" value="Cytochrome f, large domain"/>
    <property type="match status" value="1"/>
</dbReference>
<dbReference type="SUPFAM" id="SSF51246">
    <property type="entry name" value="Rudiment single hybrid motif"/>
    <property type="match status" value="1"/>
</dbReference>
<dbReference type="PROSITE" id="PS51010">
    <property type="entry name" value="CYTF"/>
    <property type="match status" value="1"/>
</dbReference>
<gene>
    <name evidence="2" type="primary">petA</name>
</gene>
<name>CYF_NYMAL</name>
<feature type="signal peptide" evidence="2">
    <location>
        <begin position="1"/>
        <end position="36"/>
    </location>
</feature>
<feature type="chain" id="PRO_0000023822" description="Cytochrome f">
    <location>
        <begin position="37"/>
        <end position="322"/>
    </location>
</feature>
<feature type="transmembrane region" description="Helical" evidence="2">
    <location>
        <begin position="288"/>
        <end position="308"/>
    </location>
</feature>
<feature type="binding site" description="axial binding residue" evidence="2">
    <location>
        <position position="37"/>
    </location>
    <ligand>
        <name>heme</name>
        <dbReference type="ChEBI" id="CHEBI:30413"/>
    </ligand>
    <ligandPart>
        <name>Fe</name>
        <dbReference type="ChEBI" id="CHEBI:18248"/>
    </ligandPart>
</feature>
<feature type="binding site" description="covalent" evidence="2">
    <location>
        <position position="57"/>
    </location>
    <ligand>
        <name>heme</name>
        <dbReference type="ChEBI" id="CHEBI:30413"/>
    </ligand>
</feature>
<feature type="binding site" description="covalent" evidence="2">
    <location>
        <position position="60"/>
    </location>
    <ligand>
        <name>heme</name>
        <dbReference type="ChEBI" id="CHEBI:30413"/>
    </ligand>
</feature>
<feature type="binding site" description="axial binding residue" evidence="2">
    <location>
        <position position="61"/>
    </location>
    <ligand>
        <name>heme</name>
        <dbReference type="ChEBI" id="CHEBI:30413"/>
    </ligand>
    <ligandPart>
        <name>Fe</name>
        <dbReference type="ChEBI" id="CHEBI:18248"/>
    </ligandPart>
</feature>